<keyword id="KW-0687">Ribonucleoprotein</keyword>
<keyword id="KW-0689">Ribosomal protein</keyword>
<evidence type="ECO:0000255" key="1">
    <source>
        <dbReference type="HAMAP-Rule" id="MF_00514"/>
    </source>
</evidence>
<evidence type="ECO:0000256" key="2">
    <source>
        <dbReference type="SAM" id="MobiDB-lite"/>
    </source>
</evidence>
<evidence type="ECO:0000305" key="3"/>
<name>RL35_CLOB8</name>
<feature type="chain" id="PRO_1000081601" description="Large ribosomal subunit protein bL35">
    <location>
        <begin position="1"/>
        <end position="65"/>
    </location>
</feature>
<feature type="region of interest" description="Disordered" evidence="2">
    <location>
        <begin position="1"/>
        <end position="26"/>
    </location>
</feature>
<organism>
    <name type="scientific">Clostridium beijerinckii (strain ATCC 51743 / NCIMB 8052)</name>
    <name type="common">Clostridium acetobutylicum</name>
    <dbReference type="NCBI Taxonomy" id="290402"/>
    <lineage>
        <taxon>Bacteria</taxon>
        <taxon>Bacillati</taxon>
        <taxon>Bacillota</taxon>
        <taxon>Clostridia</taxon>
        <taxon>Eubacteriales</taxon>
        <taxon>Clostridiaceae</taxon>
        <taxon>Clostridium</taxon>
    </lineage>
</organism>
<comment type="similarity">
    <text evidence="1">Belongs to the bacterial ribosomal protein bL35 family.</text>
</comment>
<dbReference type="EMBL" id="CP000721">
    <property type="protein sequence ID" value="ABR33744.1"/>
    <property type="molecule type" value="Genomic_DNA"/>
</dbReference>
<dbReference type="RefSeq" id="WP_011968896.1">
    <property type="nucleotide sequence ID" value="NC_009617.1"/>
</dbReference>
<dbReference type="SMR" id="A6LTR4"/>
<dbReference type="GeneID" id="66344537"/>
<dbReference type="KEGG" id="cbe:Cbei_1570"/>
<dbReference type="eggNOG" id="COG0291">
    <property type="taxonomic scope" value="Bacteria"/>
</dbReference>
<dbReference type="HOGENOM" id="CLU_169643_1_1_9"/>
<dbReference type="Proteomes" id="UP000000565">
    <property type="component" value="Chromosome"/>
</dbReference>
<dbReference type="GO" id="GO:0022625">
    <property type="term" value="C:cytosolic large ribosomal subunit"/>
    <property type="evidence" value="ECO:0007669"/>
    <property type="project" value="TreeGrafter"/>
</dbReference>
<dbReference type="GO" id="GO:0003735">
    <property type="term" value="F:structural constituent of ribosome"/>
    <property type="evidence" value="ECO:0007669"/>
    <property type="project" value="InterPro"/>
</dbReference>
<dbReference type="GO" id="GO:0006412">
    <property type="term" value="P:translation"/>
    <property type="evidence" value="ECO:0007669"/>
    <property type="project" value="UniProtKB-UniRule"/>
</dbReference>
<dbReference type="FunFam" id="4.10.410.60:FF:000001">
    <property type="entry name" value="50S ribosomal protein L35"/>
    <property type="match status" value="1"/>
</dbReference>
<dbReference type="Gene3D" id="4.10.410.60">
    <property type="match status" value="1"/>
</dbReference>
<dbReference type="HAMAP" id="MF_00514">
    <property type="entry name" value="Ribosomal_bL35"/>
    <property type="match status" value="1"/>
</dbReference>
<dbReference type="InterPro" id="IPR001706">
    <property type="entry name" value="Ribosomal_bL35"/>
</dbReference>
<dbReference type="InterPro" id="IPR021137">
    <property type="entry name" value="Ribosomal_bL35-like"/>
</dbReference>
<dbReference type="InterPro" id="IPR018265">
    <property type="entry name" value="Ribosomal_bL35_CS"/>
</dbReference>
<dbReference type="InterPro" id="IPR037229">
    <property type="entry name" value="Ribosomal_bL35_sf"/>
</dbReference>
<dbReference type="NCBIfam" id="TIGR00001">
    <property type="entry name" value="rpmI_bact"/>
    <property type="match status" value="1"/>
</dbReference>
<dbReference type="PANTHER" id="PTHR33343">
    <property type="entry name" value="54S RIBOSOMAL PROTEIN BL35M"/>
    <property type="match status" value="1"/>
</dbReference>
<dbReference type="PANTHER" id="PTHR33343:SF1">
    <property type="entry name" value="LARGE RIBOSOMAL SUBUNIT PROTEIN BL35M"/>
    <property type="match status" value="1"/>
</dbReference>
<dbReference type="Pfam" id="PF01632">
    <property type="entry name" value="Ribosomal_L35p"/>
    <property type="match status" value="1"/>
</dbReference>
<dbReference type="PRINTS" id="PR00064">
    <property type="entry name" value="RIBOSOMALL35"/>
</dbReference>
<dbReference type="SUPFAM" id="SSF143034">
    <property type="entry name" value="L35p-like"/>
    <property type="match status" value="1"/>
</dbReference>
<dbReference type="PROSITE" id="PS00936">
    <property type="entry name" value="RIBOSOMAL_L35"/>
    <property type="match status" value="1"/>
</dbReference>
<gene>
    <name evidence="1" type="primary">rpmI</name>
    <name type="ordered locus">Cbei_1570</name>
</gene>
<reference key="1">
    <citation type="submission" date="2007-06" db="EMBL/GenBank/DDBJ databases">
        <title>Complete sequence of Clostridium beijerinckii NCIMB 8052.</title>
        <authorList>
            <consortium name="US DOE Joint Genome Institute"/>
            <person name="Copeland A."/>
            <person name="Lucas S."/>
            <person name="Lapidus A."/>
            <person name="Barry K."/>
            <person name="Detter J.C."/>
            <person name="Glavina del Rio T."/>
            <person name="Hammon N."/>
            <person name="Israni S."/>
            <person name="Dalin E."/>
            <person name="Tice H."/>
            <person name="Pitluck S."/>
            <person name="Sims D."/>
            <person name="Brettin T."/>
            <person name="Bruce D."/>
            <person name="Tapia R."/>
            <person name="Brainard J."/>
            <person name="Schmutz J."/>
            <person name="Larimer F."/>
            <person name="Land M."/>
            <person name="Hauser L."/>
            <person name="Kyrpides N."/>
            <person name="Mikhailova N."/>
            <person name="Bennet G."/>
            <person name="Cann I."/>
            <person name="Chen J.-S."/>
            <person name="Contreras A.L."/>
            <person name="Jones D."/>
            <person name="Kashket E."/>
            <person name="Mitchell W."/>
            <person name="Stoddard S."/>
            <person name="Schwarz W."/>
            <person name="Qureshi N."/>
            <person name="Young M."/>
            <person name="Shi Z."/>
            <person name="Ezeji T."/>
            <person name="White B."/>
            <person name="Blaschek H."/>
            <person name="Richardson P."/>
        </authorList>
    </citation>
    <scope>NUCLEOTIDE SEQUENCE [LARGE SCALE GENOMIC DNA]</scope>
    <source>
        <strain>ATCC 51743 / NCIMB 8052</strain>
    </source>
</reference>
<sequence length="65" mass="7511">MPKMKTHRGAAKRFRKTGTGKLKRGKAFRSHILTKKSSKTKRHLRKAGYVSDSQLKVMKKLLPYL</sequence>
<accession>A6LTR4</accession>
<protein>
    <recommendedName>
        <fullName evidence="1">Large ribosomal subunit protein bL35</fullName>
    </recommendedName>
    <alternativeName>
        <fullName evidence="3">50S ribosomal protein L35</fullName>
    </alternativeName>
</protein>
<proteinExistence type="inferred from homology"/>